<feature type="chain" id="PRO_0000331583" description="Protein HGH1 homolog">
    <location>
        <begin position="1"/>
        <end position="369"/>
    </location>
</feature>
<protein>
    <recommendedName>
        <fullName>Protein HGH1 homolog</fullName>
    </recommendedName>
</protein>
<proteinExistence type="evidence at transcript level"/>
<comment type="similarity">
    <text evidence="1">Belongs to the HGH1 family.</text>
</comment>
<keyword id="KW-1185">Reference proteome</keyword>
<gene>
    <name type="ORF">CG6073</name>
</gene>
<evidence type="ECO:0000305" key="1"/>
<reference key="1">
    <citation type="journal article" date="2000" name="Science">
        <title>The genome sequence of Drosophila melanogaster.</title>
        <authorList>
            <person name="Adams M.D."/>
            <person name="Celniker S.E."/>
            <person name="Holt R.A."/>
            <person name="Evans C.A."/>
            <person name="Gocayne J.D."/>
            <person name="Amanatides P.G."/>
            <person name="Scherer S.E."/>
            <person name="Li P.W."/>
            <person name="Hoskins R.A."/>
            <person name="Galle R.F."/>
            <person name="George R.A."/>
            <person name="Lewis S.E."/>
            <person name="Richards S."/>
            <person name="Ashburner M."/>
            <person name="Henderson S.N."/>
            <person name="Sutton G.G."/>
            <person name="Wortman J.R."/>
            <person name="Yandell M.D."/>
            <person name="Zhang Q."/>
            <person name="Chen L.X."/>
            <person name="Brandon R.C."/>
            <person name="Rogers Y.-H.C."/>
            <person name="Blazej R.G."/>
            <person name="Champe M."/>
            <person name="Pfeiffer B.D."/>
            <person name="Wan K.H."/>
            <person name="Doyle C."/>
            <person name="Baxter E.G."/>
            <person name="Helt G."/>
            <person name="Nelson C.R."/>
            <person name="Miklos G.L.G."/>
            <person name="Abril J.F."/>
            <person name="Agbayani A."/>
            <person name="An H.-J."/>
            <person name="Andrews-Pfannkoch C."/>
            <person name="Baldwin D."/>
            <person name="Ballew R.M."/>
            <person name="Basu A."/>
            <person name="Baxendale J."/>
            <person name="Bayraktaroglu L."/>
            <person name="Beasley E.M."/>
            <person name="Beeson K.Y."/>
            <person name="Benos P.V."/>
            <person name="Berman B.P."/>
            <person name="Bhandari D."/>
            <person name="Bolshakov S."/>
            <person name="Borkova D."/>
            <person name="Botchan M.R."/>
            <person name="Bouck J."/>
            <person name="Brokstein P."/>
            <person name="Brottier P."/>
            <person name="Burtis K.C."/>
            <person name="Busam D.A."/>
            <person name="Butler H."/>
            <person name="Cadieu E."/>
            <person name="Center A."/>
            <person name="Chandra I."/>
            <person name="Cherry J.M."/>
            <person name="Cawley S."/>
            <person name="Dahlke C."/>
            <person name="Davenport L.B."/>
            <person name="Davies P."/>
            <person name="de Pablos B."/>
            <person name="Delcher A."/>
            <person name="Deng Z."/>
            <person name="Mays A.D."/>
            <person name="Dew I."/>
            <person name="Dietz S.M."/>
            <person name="Dodson K."/>
            <person name="Doup L.E."/>
            <person name="Downes M."/>
            <person name="Dugan-Rocha S."/>
            <person name="Dunkov B.C."/>
            <person name="Dunn P."/>
            <person name="Durbin K.J."/>
            <person name="Evangelista C.C."/>
            <person name="Ferraz C."/>
            <person name="Ferriera S."/>
            <person name="Fleischmann W."/>
            <person name="Fosler C."/>
            <person name="Gabrielian A.E."/>
            <person name="Garg N.S."/>
            <person name="Gelbart W.M."/>
            <person name="Glasser K."/>
            <person name="Glodek A."/>
            <person name="Gong F."/>
            <person name="Gorrell J.H."/>
            <person name="Gu Z."/>
            <person name="Guan P."/>
            <person name="Harris M."/>
            <person name="Harris N.L."/>
            <person name="Harvey D.A."/>
            <person name="Heiman T.J."/>
            <person name="Hernandez J.R."/>
            <person name="Houck J."/>
            <person name="Hostin D."/>
            <person name="Houston K.A."/>
            <person name="Howland T.J."/>
            <person name="Wei M.-H."/>
            <person name="Ibegwam C."/>
            <person name="Jalali M."/>
            <person name="Kalush F."/>
            <person name="Karpen G.H."/>
            <person name="Ke Z."/>
            <person name="Kennison J.A."/>
            <person name="Ketchum K.A."/>
            <person name="Kimmel B.E."/>
            <person name="Kodira C.D."/>
            <person name="Kraft C.L."/>
            <person name="Kravitz S."/>
            <person name="Kulp D."/>
            <person name="Lai Z."/>
            <person name="Lasko P."/>
            <person name="Lei Y."/>
            <person name="Levitsky A.A."/>
            <person name="Li J.H."/>
            <person name="Li Z."/>
            <person name="Liang Y."/>
            <person name="Lin X."/>
            <person name="Liu X."/>
            <person name="Mattei B."/>
            <person name="McIntosh T.C."/>
            <person name="McLeod M.P."/>
            <person name="McPherson D."/>
            <person name="Merkulov G."/>
            <person name="Milshina N.V."/>
            <person name="Mobarry C."/>
            <person name="Morris J."/>
            <person name="Moshrefi A."/>
            <person name="Mount S.M."/>
            <person name="Moy M."/>
            <person name="Murphy B."/>
            <person name="Murphy L."/>
            <person name="Muzny D.M."/>
            <person name="Nelson D.L."/>
            <person name="Nelson D.R."/>
            <person name="Nelson K.A."/>
            <person name="Nixon K."/>
            <person name="Nusskern D.R."/>
            <person name="Pacleb J.M."/>
            <person name="Palazzolo M."/>
            <person name="Pittman G.S."/>
            <person name="Pan S."/>
            <person name="Pollard J."/>
            <person name="Puri V."/>
            <person name="Reese M.G."/>
            <person name="Reinert K."/>
            <person name="Remington K."/>
            <person name="Saunders R.D.C."/>
            <person name="Scheeler F."/>
            <person name="Shen H."/>
            <person name="Shue B.C."/>
            <person name="Siden-Kiamos I."/>
            <person name="Simpson M."/>
            <person name="Skupski M.P."/>
            <person name="Smith T.J."/>
            <person name="Spier E."/>
            <person name="Spradling A.C."/>
            <person name="Stapleton M."/>
            <person name="Strong R."/>
            <person name="Sun E."/>
            <person name="Svirskas R."/>
            <person name="Tector C."/>
            <person name="Turner R."/>
            <person name="Venter E."/>
            <person name="Wang A.H."/>
            <person name="Wang X."/>
            <person name="Wang Z.-Y."/>
            <person name="Wassarman D.A."/>
            <person name="Weinstock G.M."/>
            <person name="Weissenbach J."/>
            <person name="Williams S.M."/>
            <person name="Woodage T."/>
            <person name="Worley K.C."/>
            <person name="Wu D."/>
            <person name="Yang S."/>
            <person name="Yao Q.A."/>
            <person name="Ye J."/>
            <person name="Yeh R.-F."/>
            <person name="Zaveri J.S."/>
            <person name="Zhan M."/>
            <person name="Zhang G."/>
            <person name="Zhao Q."/>
            <person name="Zheng L."/>
            <person name="Zheng X.H."/>
            <person name="Zhong F.N."/>
            <person name="Zhong W."/>
            <person name="Zhou X."/>
            <person name="Zhu S.C."/>
            <person name="Zhu X."/>
            <person name="Smith H.O."/>
            <person name="Gibbs R.A."/>
            <person name="Myers E.W."/>
            <person name="Rubin G.M."/>
            <person name="Venter J.C."/>
        </authorList>
    </citation>
    <scope>NUCLEOTIDE SEQUENCE [LARGE SCALE GENOMIC DNA]</scope>
    <source>
        <strain>Berkeley</strain>
    </source>
</reference>
<reference key="2">
    <citation type="journal article" date="2002" name="Genome Biol.">
        <title>Annotation of the Drosophila melanogaster euchromatic genome: a systematic review.</title>
        <authorList>
            <person name="Misra S."/>
            <person name="Crosby M.A."/>
            <person name="Mungall C.J."/>
            <person name="Matthews B.B."/>
            <person name="Campbell K.S."/>
            <person name="Hradecky P."/>
            <person name="Huang Y."/>
            <person name="Kaminker J.S."/>
            <person name="Millburn G.H."/>
            <person name="Prochnik S.E."/>
            <person name="Smith C.D."/>
            <person name="Tupy J.L."/>
            <person name="Whitfield E.J."/>
            <person name="Bayraktaroglu L."/>
            <person name="Berman B.P."/>
            <person name="Bettencourt B.R."/>
            <person name="Celniker S.E."/>
            <person name="de Grey A.D.N.J."/>
            <person name="Drysdale R.A."/>
            <person name="Harris N.L."/>
            <person name="Richter J."/>
            <person name="Russo S."/>
            <person name="Schroeder A.J."/>
            <person name="Shu S.Q."/>
            <person name="Stapleton M."/>
            <person name="Yamada C."/>
            <person name="Ashburner M."/>
            <person name="Gelbart W.M."/>
            <person name="Rubin G.M."/>
            <person name="Lewis S.E."/>
        </authorList>
    </citation>
    <scope>GENOME REANNOTATION</scope>
    <source>
        <strain>Berkeley</strain>
    </source>
</reference>
<reference key="3">
    <citation type="journal article" date="2002" name="Genome Biol.">
        <title>A Drosophila full-length cDNA resource.</title>
        <authorList>
            <person name="Stapleton M."/>
            <person name="Carlson J.W."/>
            <person name="Brokstein P."/>
            <person name="Yu C."/>
            <person name="Champe M."/>
            <person name="George R.A."/>
            <person name="Guarin H."/>
            <person name="Kronmiller B."/>
            <person name="Pacleb J.M."/>
            <person name="Park S."/>
            <person name="Wan K.H."/>
            <person name="Rubin G.M."/>
            <person name="Celniker S.E."/>
        </authorList>
    </citation>
    <scope>NUCLEOTIDE SEQUENCE [LARGE SCALE MRNA]</scope>
    <source>
        <strain>Berkeley</strain>
        <tissue>Embryo</tissue>
        <tissue>Ovary</tissue>
    </source>
</reference>
<accession>Q9VBG6</accession>
<accession>Q95S85</accession>
<name>HGH1_DROME</name>
<dbReference type="EMBL" id="AE014297">
    <property type="protein sequence ID" value="AAF56576.2"/>
    <property type="molecule type" value="Genomic_DNA"/>
</dbReference>
<dbReference type="EMBL" id="AY060916">
    <property type="protein sequence ID" value="AAL28464.1"/>
    <property type="molecule type" value="mRNA"/>
</dbReference>
<dbReference type="EMBL" id="AY128461">
    <property type="protein sequence ID" value="AAM75054.1"/>
    <property type="molecule type" value="mRNA"/>
</dbReference>
<dbReference type="RefSeq" id="NP_001247313.1">
    <property type="nucleotide sequence ID" value="NM_001260384.2"/>
</dbReference>
<dbReference type="RefSeq" id="NP_651468.1">
    <property type="nucleotide sequence ID" value="NM_143211.4"/>
</dbReference>
<dbReference type="SMR" id="Q9VBG6"/>
<dbReference type="BioGRID" id="68077">
    <property type="interactions" value="2"/>
</dbReference>
<dbReference type="FunCoup" id="Q9VBG6">
    <property type="interactions" value="1647"/>
</dbReference>
<dbReference type="IntAct" id="Q9VBG6">
    <property type="interactions" value="1"/>
</dbReference>
<dbReference type="STRING" id="7227.FBpp0084375"/>
<dbReference type="PaxDb" id="7227-FBpp0084375"/>
<dbReference type="EnsemblMetazoa" id="FBtr0085003">
    <property type="protein sequence ID" value="FBpp0084375"/>
    <property type="gene ID" value="FBgn0039417"/>
</dbReference>
<dbReference type="EnsemblMetazoa" id="FBtr0307342">
    <property type="protein sequence ID" value="FBpp0298343"/>
    <property type="gene ID" value="FBgn0039417"/>
</dbReference>
<dbReference type="GeneID" id="43180"/>
<dbReference type="KEGG" id="dme:Dmel_CG6073"/>
<dbReference type="UCSC" id="CG6073-RA">
    <property type="organism name" value="d. melanogaster"/>
</dbReference>
<dbReference type="AGR" id="FB:FBgn0039417"/>
<dbReference type="FlyBase" id="FBgn0039417">
    <property type="gene designation" value="CG6073"/>
</dbReference>
<dbReference type="VEuPathDB" id="VectorBase:FBgn0039417"/>
<dbReference type="eggNOG" id="KOG2973">
    <property type="taxonomic scope" value="Eukaryota"/>
</dbReference>
<dbReference type="GeneTree" id="ENSGT00390000016546"/>
<dbReference type="HOGENOM" id="CLU_037769_3_0_1"/>
<dbReference type="InParanoid" id="Q9VBG6"/>
<dbReference type="OMA" id="MCILLTN"/>
<dbReference type="OrthoDB" id="338814at2759"/>
<dbReference type="PhylomeDB" id="Q9VBG6"/>
<dbReference type="BioGRID-ORCS" id="43180">
    <property type="hits" value="0 hits in 1 CRISPR screen"/>
</dbReference>
<dbReference type="GenomeRNAi" id="43180"/>
<dbReference type="PRO" id="PR:Q9VBG6"/>
<dbReference type="Proteomes" id="UP000000803">
    <property type="component" value="Chromosome 3R"/>
</dbReference>
<dbReference type="Bgee" id="FBgn0039417">
    <property type="expression patterns" value="Expressed in germline cell (Drosophila) in post-embryonic organism and 44 other cell types or tissues"/>
</dbReference>
<dbReference type="ExpressionAtlas" id="Q9VBG6">
    <property type="expression patterns" value="baseline and differential"/>
</dbReference>
<dbReference type="Gene3D" id="1.25.10.10">
    <property type="entry name" value="Leucine-rich Repeat Variant"/>
    <property type="match status" value="1"/>
</dbReference>
<dbReference type="InterPro" id="IPR011989">
    <property type="entry name" value="ARM-like"/>
</dbReference>
<dbReference type="InterPro" id="IPR016024">
    <property type="entry name" value="ARM-type_fold"/>
</dbReference>
<dbReference type="InterPro" id="IPR039717">
    <property type="entry name" value="Hgh1"/>
</dbReference>
<dbReference type="InterPro" id="IPR007206">
    <property type="entry name" value="Protein_HGH1_C"/>
</dbReference>
<dbReference type="InterPro" id="IPR007205">
    <property type="entry name" value="Protein_HGH1_N"/>
</dbReference>
<dbReference type="PANTHER" id="PTHR13387">
    <property type="entry name" value="PROTEIN HGH1 HOMOLOG"/>
    <property type="match status" value="1"/>
</dbReference>
<dbReference type="PANTHER" id="PTHR13387:SF9">
    <property type="entry name" value="PROTEIN HGH1 HOMOLOG"/>
    <property type="match status" value="1"/>
</dbReference>
<dbReference type="Pfam" id="PF04063">
    <property type="entry name" value="DUF383"/>
    <property type="match status" value="1"/>
</dbReference>
<dbReference type="Pfam" id="PF04064">
    <property type="entry name" value="DUF384"/>
    <property type="match status" value="1"/>
</dbReference>
<dbReference type="SUPFAM" id="SSF48371">
    <property type="entry name" value="ARM repeat"/>
    <property type="match status" value="1"/>
</dbReference>
<organism>
    <name type="scientific">Drosophila melanogaster</name>
    <name type="common">Fruit fly</name>
    <dbReference type="NCBI Taxonomy" id="7227"/>
    <lineage>
        <taxon>Eukaryota</taxon>
        <taxon>Metazoa</taxon>
        <taxon>Ecdysozoa</taxon>
        <taxon>Arthropoda</taxon>
        <taxon>Hexapoda</taxon>
        <taxon>Insecta</taxon>
        <taxon>Pterygota</taxon>
        <taxon>Neoptera</taxon>
        <taxon>Endopterygota</taxon>
        <taxon>Diptera</taxon>
        <taxon>Brachycera</taxon>
        <taxon>Muscomorpha</taxon>
        <taxon>Ephydroidea</taxon>
        <taxon>Drosophilidae</taxon>
        <taxon>Drosophila</taxon>
        <taxon>Sophophora</taxon>
    </lineage>
</organism>
<sequence length="369" mass="41799">METVKELVQFMQPNQRLDLKAVALTHVLGLTGSSEGKSAILSLDEMLMAIFGLTFDANQTVAKDAVLSLINLTSEEEAAIKVFQLAKQLQPPFAIVEVAAKEITNEQSDLADPWSMVLSNLTRVESLVHEILDTLERDDHTLPRLAKAFAQLDYNKKKAKLHYLAPIFCNLTQVSRGRELCCHRKYELLEKLLPFASFEGSVVRRGGTIGILKNVCFDTVYHDVILNEQSSILVAILQPLCGPEEFSDEDNELLPIELQYLPESKTREEDPDLRKMLLECLLQLCSTRRSREILRSRGVYEILREYHKWEAKVGKDSDCLLACENVVDILIKKEEEIGLDNYKTEVEVPAEQSEKFVQEDAAYVKSLLD</sequence>